<comment type="function">
    <text evidence="1 2 3">Component of the nexin-dynein regulatory complex (N-DRC), a key regulator of ciliary/flagellar motility which maintains the alignment and integrity of the distal axoneme and regulates microtubule sliding in motile axonemes. Binds calmodulin when cellular Ca(2+) levels are low and thereby contributes to the regulation of calcium and calmodulin-dependent protein kinase IV (CAMK4) activity; contributes to the regulation of CAMK4 signaling cascades. Required for normal axoneme assembly in sperm flagella, normal sperm tail formation and for male fertility.</text>
</comment>
<comment type="subunit">
    <text evidence="2 3 7">Component of the nexin-dynein regulatory complex (N-DRC) (By similarity). Interacts (via IQ domain) with CALM when calcium levels are low. Does not interact with CALM in the presence of Ca(2+). Interacts with the HSP70 proteins HSPA1L and HSPA8 (PubMed:24787902). May form a complex with CAMK4 and HSP70 (By similarity).</text>
</comment>
<comment type="subcellular location">
    <subcellularLocation>
        <location evidence="7">Cytoplasm</location>
    </subcellularLocation>
    <subcellularLocation>
        <location evidence="3">Cell projection</location>
        <location evidence="3">Cilium</location>
        <location evidence="3">Flagellum</location>
    </subcellularLocation>
    <subcellularLocation>
        <location evidence="3">Cell projection</location>
        <location evidence="3">Cilium</location>
    </subcellularLocation>
    <subcellularLocation>
        <location evidence="3">Cytoplasm</location>
        <location evidence="3">Cytoskeleton</location>
    </subcellularLocation>
    <subcellularLocation>
        <location evidence="2">Cytoplasm</location>
        <location evidence="2">Cytoskeleton</location>
        <location evidence="2">Flagellum axoneme</location>
    </subcellularLocation>
    <text evidence="3">First detected in the cytoplasm of pachytene spermatocytes. Colocalizes with alpha-tubulin at the manchette in developing spermatids. Detected in the flagellum of mature testicular spermatozoa, and in the flagellum and post-acrosomal region of the head of epididymal spermatozoa. Detected in cilia in trachea and oviduct.</text>
</comment>
<comment type="alternative products">
    <event type="alternative splicing"/>
    <isoform>
        <id>Q9H095-1</id>
        <name>1</name>
        <sequence type="displayed"/>
    </isoform>
    <isoform>
        <id>Q9H095-2</id>
        <name>2</name>
        <sequence type="described" ref="VSP_024187"/>
    </isoform>
</comment>
<comment type="domain">
    <text evidence="7">The IQ domain mediates interaction with calmodulin when cellular Ca(2+) levels are low.</text>
</comment>
<comment type="similarity">
    <text evidence="9">Belongs to the DRC9 family.</text>
</comment>
<name>DRC9_HUMAN</name>
<reference key="1">
    <citation type="journal article" date="2001" name="Genome Res.">
        <title>Towards a catalog of human genes and proteins: sequencing and analysis of 500 novel complete protein coding human cDNAs.</title>
        <authorList>
            <person name="Wiemann S."/>
            <person name="Weil B."/>
            <person name="Wellenreuther R."/>
            <person name="Gassenhuber J."/>
            <person name="Glassl S."/>
            <person name="Ansorge W."/>
            <person name="Boecher M."/>
            <person name="Bloecker H."/>
            <person name="Bauersachs S."/>
            <person name="Blum H."/>
            <person name="Lauber J."/>
            <person name="Duesterhoeft A."/>
            <person name="Beyer A."/>
            <person name="Koehrer K."/>
            <person name="Strack N."/>
            <person name="Mewes H.-W."/>
            <person name="Ottenwaelder B."/>
            <person name="Obermaier B."/>
            <person name="Tampe J."/>
            <person name="Heubner D."/>
            <person name="Wambutt R."/>
            <person name="Korn B."/>
            <person name="Klein M."/>
            <person name="Poustka A."/>
        </authorList>
    </citation>
    <scope>NUCLEOTIDE SEQUENCE [LARGE SCALE MRNA] (ISOFORM 1)</scope>
    <source>
        <tissue>Testis</tissue>
    </source>
</reference>
<reference key="2">
    <citation type="submission" date="2004-06" db="EMBL/GenBank/DDBJ databases">
        <title>Cloning of human full open reading frames in Gateway(TM) system entry vector (pDONR201).</title>
        <authorList>
            <person name="Ebert L."/>
            <person name="Schick M."/>
            <person name="Neubert P."/>
            <person name="Schatten R."/>
            <person name="Henze S."/>
            <person name="Korn B."/>
        </authorList>
    </citation>
    <scope>NUCLEOTIDE SEQUENCE [LARGE SCALE MRNA] (ISOFORM 1)</scope>
</reference>
<reference key="3">
    <citation type="journal article" date="2004" name="Nat. Genet.">
        <title>Complete sequencing and characterization of 21,243 full-length human cDNAs.</title>
        <authorList>
            <person name="Ota T."/>
            <person name="Suzuki Y."/>
            <person name="Nishikawa T."/>
            <person name="Otsuki T."/>
            <person name="Sugiyama T."/>
            <person name="Irie R."/>
            <person name="Wakamatsu A."/>
            <person name="Hayashi K."/>
            <person name="Sato H."/>
            <person name="Nagai K."/>
            <person name="Kimura K."/>
            <person name="Makita H."/>
            <person name="Sekine M."/>
            <person name="Obayashi M."/>
            <person name="Nishi T."/>
            <person name="Shibahara T."/>
            <person name="Tanaka T."/>
            <person name="Ishii S."/>
            <person name="Yamamoto J."/>
            <person name="Saito K."/>
            <person name="Kawai Y."/>
            <person name="Isono Y."/>
            <person name="Nakamura Y."/>
            <person name="Nagahari K."/>
            <person name="Murakami K."/>
            <person name="Yasuda T."/>
            <person name="Iwayanagi T."/>
            <person name="Wagatsuma M."/>
            <person name="Shiratori A."/>
            <person name="Sudo H."/>
            <person name="Hosoiri T."/>
            <person name="Kaku Y."/>
            <person name="Kodaira H."/>
            <person name="Kondo H."/>
            <person name="Sugawara M."/>
            <person name="Takahashi M."/>
            <person name="Kanda K."/>
            <person name="Yokoi T."/>
            <person name="Furuya T."/>
            <person name="Kikkawa E."/>
            <person name="Omura Y."/>
            <person name="Abe K."/>
            <person name="Kamihara K."/>
            <person name="Katsuta N."/>
            <person name="Sato K."/>
            <person name="Tanikawa M."/>
            <person name="Yamazaki M."/>
            <person name="Ninomiya K."/>
            <person name="Ishibashi T."/>
            <person name="Yamashita H."/>
            <person name="Murakawa K."/>
            <person name="Fujimori K."/>
            <person name="Tanai H."/>
            <person name="Kimata M."/>
            <person name="Watanabe M."/>
            <person name="Hiraoka S."/>
            <person name="Chiba Y."/>
            <person name="Ishida S."/>
            <person name="Ono Y."/>
            <person name="Takiguchi S."/>
            <person name="Watanabe S."/>
            <person name="Yosida M."/>
            <person name="Hotuta T."/>
            <person name="Kusano J."/>
            <person name="Kanehori K."/>
            <person name="Takahashi-Fujii A."/>
            <person name="Hara H."/>
            <person name="Tanase T.-O."/>
            <person name="Nomura Y."/>
            <person name="Togiya S."/>
            <person name="Komai F."/>
            <person name="Hara R."/>
            <person name="Takeuchi K."/>
            <person name="Arita M."/>
            <person name="Imose N."/>
            <person name="Musashino K."/>
            <person name="Yuuki H."/>
            <person name="Oshima A."/>
            <person name="Sasaki N."/>
            <person name="Aotsuka S."/>
            <person name="Yoshikawa Y."/>
            <person name="Matsunawa H."/>
            <person name="Ichihara T."/>
            <person name="Shiohata N."/>
            <person name="Sano S."/>
            <person name="Moriya S."/>
            <person name="Momiyama H."/>
            <person name="Satoh N."/>
            <person name="Takami S."/>
            <person name="Terashima Y."/>
            <person name="Suzuki O."/>
            <person name="Nakagawa S."/>
            <person name="Senoh A."/>
            <person name="Mizoguchi H."/>
            <person name="Goto Y."/>
            <person name="Shimizu F."/>
            <person name="Wakebe H."/>
            <person name="Hishigaki H."/>
            <person name="Watanabe T."/>
            <person name="Sugiyama A."/>
            <person name="Takemoto M."/>
            <person name="Kawakami B."/>
            <person name="Yamazaki M."/>
            <person name="Watanabe K."/>
            <person name="Kumagai A."/>
            <person name="Itakura S."/>
            <person name="Fukuzumi Y."/>
            <person name="Fujimori Y."/>
            <person name="Komiyama M."/>
            <person name="Tashiro H."/>
            <person name="Tanigami A."/>
            <person name="Fujiwara T."/>
            <person name="Ono T."/>
            <person name="Yamada K."/>
            <person name="Fujii Y."/>
            <person name="Ozaki K."/>
            <person name="Hirao M."/>
            <person name="Ohmori Y."/>
            <person name="Kawabata A."/>
            <person name="Hikiji T."/>
            <person name="Kobatake N."/>
            <person name="Inagaki H."/>
            <person name="Ikema Y."/>
            <person name="Okamoto S."/>
            <person name="Okitani R."/>
            <person name="Kawakami T."/>
            <person name="Noguchi S."/>
            <person name="Itoh T."/>
            <person name="Shigeta K."/>
            <person name="Senba T."/>
            <person name="Matsumura K."/>
            <person name="Nakajima Y."/>
            <person name="Mizuno T."/>
            <person name="Morinaga M."/>
            <person name="Sasaki M."/>
            <person name="Togashi T."/>
            <person name="Oyama M."/>
            <person name="Hata H."/>
            <person name="Watanabe M."/>
            <person name="Komatsu T."/>
            <person name="Mizushima-Sugano J."/>
            <person name="Satoh T."/>
            <person name="Shirai Y."/>
            <person name="Takahashi Y."/>
            <person name="Nakagawa K."/>
            <person name="Okumura K."/>
            <person name="Nagase T."/>
            <person name="Nomura N."/>
            <person name="Kikuchi H."/>
            <person name="Masuho Y."/>
            <person name="Yamashita R."/>
            <person name="Nakai K."/>
            <person name="Yada T."/>
            <person name="Nakamura Y."/>
            <person name="Ohara O."/>
            <person name="Isogai T."/>
            <person name="Sugano S."/>
        </authorList>
    </citation>
    <scope>NUCLEOTIDE SEQUENCE [LARGE SCALE MRNA] (ISOFORM 2)</scope>
    <source>
        <tissue>Embryo</tissue>
    </source>
</reference>
<reference key="4">
    <citation type="journal article" date="2004" name="Genome Res.">
        <title>The status, quality, and expansion of the NIH full-length cDNA project: the Mammalian Gene Collection (MGC).</title>
        <authorList>
            <consortium name="The MGC Project Team"/>
        </authorList>
    </citation>
    <scope>NUCLEOTIDE SEQUENCE [LARGE SCALE MRNA] OF 72-443 (ISOFORM 1)</scope>
    <scope>VARIANT ASP-112</scope>
    <source>
        <tissue>Placenta</tissue>
    </source>
</reference>
<reference key="5">
    <citation type="journal article" date="2014" name="Nat. Commun.">
        <title>Functional and molecular features of the calmodulin-interacting protein IQCG required for haematopoiesis in zebrafish.</title>
        <authorList>
            <person name="Chen L.T."/>
            <person name="Liang W.X."/>
            <person name="Chen S."/>
            <person name="Li R.K."/>
            <person name="Tan J.L."/>
            <person name="Xu P.F."/>
            <person name="Luo L.F."/>
            <person name="Wang L."/>
            <person name="Yu S.H."/>
            <person name="Meng G."/>
            <person name="Li K.K."/>
            <person name="Liu T.X."/>
            <person name="Chen Z."/>
            <person name="Chen S.J."/>
        </authorList>
    </citation>
    <scope>X-RAY CRYSTALLOGRAPHY (1.50 ANGSTROMS) OF 389-423 IN COMPLEX WITH CALM</scope>
    <scope>FUNCTION</scope>
    <scope>INTERACTION WITH CALM; HSPA1L AND HSPA8</scope>
    <scope>SUBCELLULAR LOCATION</scope>
    <scope>DOMAIN</scope>
    <scope>MUTAGENESIS OF GLN-401</scope>
</reference>
<dbReference type="EMBL" id="AL136889">
    <property type="protein sequence ID" value="CAB66823.1"/>
    <property type="molecule type" value="mRNA"/>
</dbReference>
<dbReference type="EMBL" id="CR533515">
    <property type="protein sequence ID" value="CAG38546.1"/>
    <property type="molecule type" value="mRNA"/>
</dbReference>
<dbReference type="EMBL" id="AK021729">
    <property type="protein sequence ID" value="BAB13881.1"/>
    <property type="molecule type" value="mRNA"/>
</dbReference>
<dbReference type="EMBL" id="BC004816">
    <property type="protein sequence ID" value="AAH04816.2"/>
    <property type="molecule type" value="mRNA"/>
</dbReference>
<dbReference type="CCDS" id="CCDS3331.1">
    <molecule id="Q9H095-1"/>
</dbReference>
<dbReference type="RefSeq" id="NP_001127907.1">
    <molecule id="Q9H095-1"/>
    <property type="nucleotide sequence ID" value="NM_001134435.3"/>
</dbReference>
<dbReference type="RefSeq" id="NP_001309956.1">
    <molecule id="Q9H095-1"/>
    <property type="nucleotide sequence ID" value="NM_001323027.2"/>
</dbReference>
<dbReference type="RefSeq" id="NP_001309957.1">
    <property type="nucleotide sequence ID" value="NM_001323028.1"/>
</dbReference>
<dbReference type="RefSeq" id="NP_001309958.1">
    <molecule id="Q9H095-2"/>
    <property type="nucleotide sequence ID" value="NM_001323029.2"/>
</dbReference>
<dbReference type="RefSeq" id="NP_115639.1">
    <molecule id="Q9H095-1"/>
    <property type="nucleotide sequence ID" value="NM_032263.5"/>
</dbReference>
<dbReference type="RefSeq" id="XP_024309558.1">
    <molecule id="Q9H095-1"/>
    <property type="nucleotide sequence ID" value="XM_024453790.2"/>
</dbReference>
<dbReference type="RefSeq" id="XP_054204061.1">
    <molecule id="Q9H095-1"/>
    <property type="nucleotide sequence ID" value="XM_054348086.1"/>
</dbReference>
<dbReference type="PDB" id="4LZX">
    <property type="method" value="X-ray"/>
    <property type="resolution" value="1.50 A"/>
    <property type="chains" value="B=389-423"/>
</dbReference>
<dbReference type="PDB" id="4M1L">
    <property type="method" value="X-ray"/>
    <property type="resolution" value="2.10 A"/>
    <property type="chains" value="B=376-435"/>
</dbReference>
<dbReference type="PDB" id="8J07">
    <property type="method" value="EM"/>
    <property type="resolution" value="4.10 A"/>
    <property type="chains" value="9=1-443"/>
</dbReference>
<dbReference type="PDBsum" id="4LZX"/>
<dbReference type="PDBsum" id="4M1L"/>
<dbReference type="PDBsum" id="8J07"/>
<dbReference type="EMDB" id="EMD-35888"/>
<dbReference type="SMR" id="Q9H095"/>
<dbReference type="BioGRID" id="123957">
    <property type="interactions" value="10"/>
</dbReference>
<dbReference type="ComplexPortal" id="CPX-8086">
    <property type="entry name" value="Nexin-dynein regulatory complex"/>
</dbReference>
<dbReference type="CORUM" id="Q9H095"/>
<dbReference type="FunCoup" id="Q9H095">
    <property type="interactions" value="143"/>
</dbReference>
<dbReference type="IntAct" id="Q9H095">
    <property type="interactions" value="3"/>
</dbReference>
<dbReference type="MINT" id="Q9H095"/>
<dbReference type="STRING" id="9606.ENSP00000265239"/>
<dbReference type="iPTMnet" id="Q9H095"/>
<dbReference type="PhosphoSitePlus" id="Q9H095"/>
<dbReference type="BioMuta" id="IQCG"/>
<dbReference type="DMDM" id="74752551"/>
<dbReference type="jPOST" id="Q9H095"/>
<dbReference type="MassIVE" id="Q9H095"/>
<dbReference type="PaxDb" id="9606-ENSP00000265239"/>
<dbReference type="PeptideAtlas" id="Q9H095"/>
<dbReference type="ProteomicsDB" id="80225">
    <molecule id="Q9H095-1"/>
</dbReference>
<dbReference type="ProteomicsDB" id="80226">
    <molecule id="Q9H095-2"/>
</dbReference>
<dbReference type="Antibodypedia" id="51727">
    <property type="antibodies" value="66 antibodies from 10 providers"/>
</dbReference>
<dbReference type="DNASU" id="84223"/>
<dbReference type="Ensembl" id="ENST00000265239.11">
    <molecule id="Q9H095-1"/>
    <property type="protein sequence ID" value="ENSP00000265239.6"/>
    <property type="gene ID" value="ENSG00000114473.14"/>
</dbReference>
<dbReference type="Ensembl" id="ENST00000455191.5">
    <molecule id="Q9H095-1"/>
    <property type="protein sequence ID" value="ENSP00000407736.1"/>
    <property type="gene ID" value="ENSG00000114473.14"/>
</dbReference>
<dbReference type="GeneID" id="84223"/>
<dbReference type="KEGG" id="hsa:84223"/>
<dbReference type="MANE-Select" id="ENST00000265239.11">
    <property type="protein sequence ID" value="ENSP00000265239.6"/>
    <property type="RefSeq nucleotide sequence ID" value="NM_032263.5"/>
    <property type="RefSeq protein sequence ID" value="NP_115639.1"/>
</dbReference>
<dbReference type="UCSC" id="uc003fyo.4">
    <molecule id="Q9H095-1"/>
    <property type="organism name" value="human"/>
</dbReference>
<dbReference type="AGR" id="HGNC:25251"/>
<dbReference type="CTD" id="84223"/>
<dbReference type="DisGeNET" id="84223"/>
<dbReference type="GeneCards" id="IQCG"/>
<dbReference type="HGNC" id="HGNC:25251">
    <property type="gene designation" value="IQCG"/>
</dbReference>
<dbReference type="HPA" id="ENSG00000114473">
    <property type="expression patterns" value="Tissue enhanced (choroid plexus, fallopian tube, testis)"/>
</dbReference>
<dbReference type="MalaCards" id="IQCG"/>
<dbReference type="MIM" id="612477">
    <property type="type" value="gene"/>
</dbReference>
<dbReference type="neXtProt" id="NX_Q9H095"/>
<dbReference type="OpenTargets" id="ENSG00000114473"/>
<dbReference type="PharmGKB" id="PA134919040"/>
<dbReference type="VEuPathDB" id="HostDB:ENSG00000114473"/>
<dbReference type="eggNOG" id="ENOG502QQR7">
    <property type="taxonomic scope" value="Eukaryota"/>
</dbReference>
<dbReference type="GeneTree" id="ENSGT00730000111263"/>
<dbReference type="HOGENOM" id="CLU_052522_0_0_1"/>
<dbReference type="InParanoid" id="Q9H095"/>
<dbReference type="OMA" id="ESKMHFY"/>
<dbReference type="OrthoDB" id="10254713at2759"/>
<dbReference type="PAN-GO" id="Q9H095">
    <property type="GO annotations" value="4 GO annotations based on evolutionary models"/>
</dbReference>
<dbReference type="PhylomeDB" id="Q9H095"/>
<dbReference type="TreeFam" id="TF326203"/>
<dbReference type="PathwayCommons" id="Q9H095"/>
<dbReference type="SignaLink" id="Q9H095"/>
<dbReference type="BioGRID-ORCS" id="84223">
    <property type="hits" value="10 hits in 1145 CRISPR screens"/>
</dbReference>
<dbReference type="ChiTaRS" id="IQCG">
    <property type="organism name" value="human"/>
</dbReference>
<dbReference type="EvolutionaryTrace" id="Q9H095"/>
<dbReference type="GenomeRNAi" id="84223"/>
<dbReference type="Pharos" id="Q9H095">
    <property type="development level" value="Tbio"/>
</dbReference>
<dbReference type="PRO" id="PR:Q9H095"/>
<dbReference type="Proteomes" id="UP000005640">
    <property type="component" value="Chromosome 3"/>
</dbReference>
<dbReference type="RNAct" id="Q9H095">
    <property type="molecule type" value="protein"/>
</dbReference>
<dbReference type="Bgee" id="ENSG00000114473">
    <property type="expression patterns" value="Expressed in right uterine tube and 148 other cell types or tissues"/>
</dbReference>
<dbReference type="ExpressionAtlas" id="Q9H095">
    <property type="expression patterns" value="baseline and differential"/>
</dbReference>
<dbReference type="GO" id="GO:0015629">
    <property type="term" value="C:actin cytoskeleton"/>
    <property type="evidence" value="ECO:0000314"/>
    <property type="project" value="HPA"/>
</dbReference>
<dbReference type="GO" id="GO:0005737">
    <property type="term" value="C:cytoplasm"/>
    <property type="evidence" value="ECO:0000314"/>
    <property type="project" value="UniProtKB"/>
</dbReference>
<dbReference type="GO" id="GO:0005829">
    <property type="term" value="C:cytosol"/>
    <property type="evidence" value="ECO:0000314"/>
    <property type="project" value="HPA"/>
</dbReference>
<dbReference type="GO" id="GO:0070062">
    <property type="term" value="C:extracellular exosome"/>
    <property type="evidence" value="ECO:0007005"/>
    <property type="project" value="UniProtKB"/>
</dbReference>
<dbReference type="GO" id="GO:0002177">
    <property type="term" value="C:manchette"/>
    <property type="evidence" value="ECO:0000250"/>
    <property type="project" value="UniProtKB"/>
</dbReference>
<dbReference type="GO" id="GO:0031514">
    <property type="term" value="C:motile cilium"/>
    <property type="evidence" value="ECO:0000250"/>
    <property type="project" value="UniProtKB"/>
</dbReference>
<dbReference type="GO" id="GO:0036126">
    <property type="term" value="C:sperm flagellum"/>
    <property type="evidence" value="ECO:0000250"/>
    <property type="project" value="UniProtKB"/>
</dbReference>
<dbReference type="GO" id="GO:0005516">
    <property type="term" value="F:calmodulin binding"/>
    <property type="evidence" value="ECO:0000314"/>
    <property type="project" value="UniProtKB"/>
</dbReference>
<dbReference type="GO" id="GO:0030544">
    <property type="term" value="F:Hsp70 protein binding"/>
    <property type="evidence" value="ECO:0000353"/>
    <property type="project" value="UniProtKB"/>
</dbReference>
<dbReference type="GO" id="GO:0044782">
    <property type="term" value="P:cilium organization"/>
    <property type="evidence" value="ECO:0000318"/>
    <property type="project" value="GO_Central"/>
</dbReference>
<dbReference type="GO" id="GO:0007288">
    <property type="term" value="P:sperm axoneme assembly"/>
    <property type="evidence" value="ECO:0000250"/>
    <property type="project" value="UniProtKB"/>
</dbReference>
<dbReference type="GO" id="GO:0007286">
    <property type="term" value="P:spermatid development"/>
    <property type="evidence" value="ECO:0000250"/>
    <property type="project" value="UniProtKB"/>
</dbReference>
<dbReference type="CDD" id="cd23766">
    <property type="entry name" value="IQCG"/>
    <property type="match status" value="1"/>
</dbReference>
<dbReference type="InterPro" id="IPR000048">
    <property type="entry name" value="IQ_motif_EF-hand-BS"/>
</dbReference>
<dbReference type="InterPro" id="IPR042618">
    <property type="entry name" value="IQCG"/>
</dbReference>
<dbReference type="PANTHER" id="PTHR14871">
    <property type="entry name" value="DYNEIN REGULATORY COMPLEX PROTEIN 9"/>
    <property type="match status" value="1"/>
</dbReference>
<dbReference type="PANTHER" id="PTHR14871:SF1">
    <property type="entry name" value="DYNEIN REGULATORY COMPLEX PROTEIN 9"/>
    <property type="match status" value="1"/>
</dbReference>
<dbReference type="Pfam" id="PF00612">
    <property type="entry name" value="IQ"/>
    <property type="match status" value="1"/>
</dbReference>
<dbReference type="PROSITE" id="PS50096">
    <property type="entry name" value="IQ"/>
    <property type="match status" value="1"/>
</dbReference>
<protein>
    <recommendedName>
        <fullName evidence="2">Dynein regulatory complex protein 9</fullName>
    </recommendedName>
    <alternativeName>
        <fullName>IQ domain-containing protein G</fullName>
    </alternativeName>
</protein>
<gene>
    <name type="primary">IQCG</name>
    <name evidence="2" type="synonym">DRC9</name>
</gene>
<sequence length="443" mass="51918">MEEDSLEDSNLPPKVWHSEMTVSVTGEPPSTVEEEGIPKETDIEIIPEIPETLEPLSLPDVLRISAVLEDTTDQLSILNYIMPVQYEGRQSICVKSREMNLEGTNLDKLPMASTITKIPSPLITEEGPNLPEIRHRGRFAVEFNKMQDLVFKKPTRQTIMTTETLKKIQIDRQFFSDVIADTIKELQDSATYNSLLQALSKERENKMHFYDIIAREEKGRKQIISLQKQLINVKKEWQFEVQSQNEYIANLKDQLQEMKAKSNLENRYMKTNTELQIAQTQKKCNRTEELLVEEIEKLRMKTEEEARTHTEIEMFLRKEQQKLEERLEFWMEKYDKDTEMKQNELNALKATKASDLAHLQDLAKMIREYEQVIIEDRIEKERSKKKVKQDLLELKSVIKLQAWWRGTMIRREIGGFKMPKDKVDSKDSKGKGKGKDKRRGKKK</sequence>
<feature type="chain" id="PRO_0000282561" description="Dynein regulatory complex protein 9">
    <location>
        <begin position="1"/>
        <end position="443"/>
    </location>
</feature>
<feature type="domain" description="IQ" evidence="4">
    <location>
        <begin position="393"/>
        <end position="422"/>
    </location>
</feature>
<feature type="region of interest" description="Disordered" evidence="5">
    <location>
        <begin position="1"/>
        <end position="34"/>
    </location>
</feature>
<feature type="region of interest" description="Disordered" evidence="5">
    <location>
        <begin position="415"/>
        <end position="443"/>
    </location>
</feature>
<feature type="compositionally biased region" description="Basic and acidic residues" evidence="5">
    <location>
        <begin position="415"/>
        <end position="430"/>
    </location>
</feature>
<feature type="compositionally biased region" description="Basic residues" evidence="5">
    <location>
        <begin position="431"/>
        <end position="443"/>
    </location>
</feature>
<feature type="splice variant" id="VSP_024187" description="In isoform 2." evidence="8">
    <location>
        <begin position="1"/>
        <end position="98"/>
    </location>
</feature>
<feature type="sequence variant" id="VAR_031415" description="In dbSNP:rs9880989." evidence="6">
    <original>A</original>
    <variation>D</variation>
    <location>
        <position position="112"/>
    </location>
</feature>
<feature type="mutagenesis site" description="Loss of calmodulin binding." evidence="7">
    <original>Q</original>
    <variation>A</variation>
    <location>
        <position position="401"/>
    </location>
</feature>
<feature type="sequence conflict" description="In Ref. 4; AAH04816." evidence="9" ref="4">
    <original>D</original>
    <variation>H</variation>
    <location>
        <position position="177"/>
    </location>
</feature>
<feature type="helix" evidence="10">
    <location>
        <begin position="389"/>
        <end position="410"/>
    </location>
</feature>
<organism>
    <name type="scientific">Homo sapiens</name>
    <name type="common">Human</name>
    <dbReference type="NCBI Taxonomy" id="9606"/>
    <lineage>
        <taxon>Eukaryota</taxon>
        <taxon>Metazoa</taxon>
        <taxon>Chordata</taxon>
        <taxon>Craniata</taxon>
        <taxon>Vertebrata</taxon>
        <taxon>Euteleostomi</taxon>
        <taxon>Mammalia</taxon>
        <taxon>Eutheria</taxon>
        <taxon>Euarchontoglires</taxon>
        <taxon>Primates</taxon>
        <taxon>Haplorrhini</taxon>
        <taxon>Catarrhini</taxon>
        <taxon>Hominidae</taxon>
        <taxon>Homo</taxon>
    </lineage>
</organism>
<keyword id="KW-0002">3D-structure</keyword>
<keyword id="KW-0025">Alternative splicing</keyword>
<keyword id="KW-0112">Calmodulin-binding</keyword>
<keyword id="KW-0966">Cell projection</keyword>
<keyword id="KW-0969">Cilium</keyword>
<keyword id="KW-0963">Cytoplasm</keyword>
<keyword id="KW-0206">Cytoskeleton</keyword>
<keyword id="KW-0221">Differentiation</keyword>
<keyword id="KW-0282">Flagellum</keyword>
<keyword id="KW-1267">Proteomics identification</keyword>
<keyword id="KW-1185">Reference proteome</keyword>
<keyword id="KW-0744">Spermatogenesis</keyword>
<proteinExistence type="evidence at protein level"/>
<evidence type="ECO:0000250" key="1">
    <source>
        <dbReference type="UniProtKB" id="A3KQH2"/>
    </source>
</evidence>
<evidence type="ECO:0000250" key="2">
    <source>
        <dbReference type="UniProtKB" id="A8HQ54"/>
    </source>
</evidence>
<evidence type="ECO:0000250" key="3">
    <source>
        <dbReference type="UniProtKB" id="Q80W32"/>
    </source>
</evidence>
<evidence type="ECO:0000255" key="4">
    <source>
        <dbReference type="PROSITE-ProRule" id="PRU00116"/>
    </source>
</evidence>
<evidence type="ECO:0000256" key="5">
    <source>
        <dbReference type="SAM" id="MobiDB-lite"/>
    </source>
</evidence>
<evidence type="ECO:0000269" key="6">
    <source>
    </source>
</evidence>
<evidence type="ECO:0000269" key="7">
    <source>
    </source>
</evidence>
<evidence type="ECO:0000303" key="8">
    <source>
    </source>
</evidence>
<evidence type="ECO:0000305" key="9"/>
<evidence type="ECO:0007829" key="10">
    <source>
        <dbReference type="PDB" id="4LZX"/>
    </source>
</evidence>
<accession>Q9H095</accession>
<accession>Q9BST2</accession>
<accession>Q9HAG8</accession>